<accession>P17372</accession>
<accession>Q80HY5</accession>
<reference key="1">
    <citation type="journal article" date="1988" name="Virology">
        <title>Analysis of a large cluster of nonessential genes deleted from a vaccinia virus terminal transposition mutant.</title>
        <authorList>
            <person name="Kotwal G.J."/>
            <person name="Moss B."/>
        </authorList>
    </citation>
    <scope>NUCLEOTIDE SEQUENCE [GENOMIC DNA]</scope>
</reference>
<reference key="2">
    <citation type="submission" date="2003-02" db="EMBL/GenBank/DDBJ databases">
        <title>Sequencing of the coding region of Vaccinia-WR to an average 9-fold redundancy and an error rate of 0.16/10kb.</title>
        <authorList>
            <person name="Esposito J.J."/>
            <person name="Frace A.M."/>
            <person name="Sammons S.A."/>
            <person name="Olsen-Rasmussen M."/>
            <person name="Osborne J."/>
            <person name="Wohlhueter R."/>
        </authorList>
    </citation>
    <scope>NUCLEOTIDE SEQUENCE [GENOMIC DNA]</scope>
</reference>
<reference key="3">
    <citation type="journal article" date="2018" name="J. Virol.">
        <title>Vaccinia Virus C9 Ankyrin Repeat/F-Box Protein Is a Newly Identified Antagonist of the Type I Interferon-Induced Antiviral State.</title>
        <authorList>
            <person name="Liu R."/>
            <person name="Moss B."/>
        </authorList>
    </citation>
    <scope>FUNCTION</scope>
    <scope>INTERACTION WITH HOST CUL1; SKP1; COPS7A AND COPS7B</scope>
</reference>
<reference key="4">
    <citation type="journal article" date="2015" name="J. Virol.">
        <title>Deciphering poxvirus gene expression by RNA sequencing and ribosome profiling.</title>
        <authorList>
            <person name="Yang Z."/>
            <person name="Cao S."/>
            <person name="Martens C.A."/>
            <person name="Porcella S.F."/>
            <person name="Xie Z."/>
            <person name="Ma M."/>
            <person name="Shen B."/>
            <person name="Moss B."/>
        </authorList>
    </citation>
    <scope>INDUCTION</scope>
</reference>
<organism>
    <name type="scientific">Vaccinia virus (strain Western Reserve)</name>
    <name type="common">VACV</name>
    <name type="synonym">Vaccinia virus (strain WR)</name>
    <dbReference type="NCBI Taxonomy" id="10254"/>
    <lineage>
        <taxon>Viruses</taxon>
        <taxon>Varidnaviria</taxon>
        <taxon>Bamfordvirae</taxon>
        <taxon>Nucleocytoviricota</taxon>
        <taxon>Pokkesviricetes</taxon>
        <taxon>Chitovirales</taxon>
        <taxon>Poxviridae</taxon>
        <taxon>Chordopoxvirinae</taxon>
        <taxon>Orthopoxvirus</taxon>
        <taxon>Vaccinia virus</taxon>
    </lineage>
</organism>
<comment type="function">
    <text evidence="2">Plays a role in the inhibition of host immune repsonse by counteracting the action of interferons on early events in the viral replication cycle.</text>
</comment>
<comment type="subunit">
    <text evidence="2">Interacts with components of host SCF complex CUL1 and SKP1 and components of the cullin deneddylation/COP9 signalosome complex subunits COPS7A and COPS7B.</text>
</comment>
<comment type="induction">
    <text evidence="1">Expressed in the early phase of the viral replicative cycle.</text>
</comment>
<comment type="similarity">
    <text evidence="3">Belongs to the orthopoxvirus OPG025 family.</text>
</comment>
<evidence type="ECO:0000269" key="1">
    <source>
    </source>
</evidence>
<evidence type="ECO:0000269" key="2">
    <source>
    </source>
</evidence>
<evidence type="ECO:0000305" key="3"/>
<gene>
    <name type="primary">OPG035</name>
    <name type="synonym">C9L</name>
    <name type="ORF">VACWR019</name>
</gene>
<name>PG025_VACCW</name>
<sequence length="634" mass="74680">MVNDKILYDSCKTFNIDASSAQSLIESGANPLYEYDGETPLKAYVTKKNNNIKNDVVILLLSSVDYKNINDFDIFEYLCSDNIDIDLLKLLISKGIEINSIKNGINIVEKYATTSNPNVDVFKLLLDKGIPTCSNIQYGYKIKIEQIRRAGEYYNWDDELDDYDYDYTTDYDDRMGKTVLYYYIITRSQDGYATSLDVINYLISHKKEMRYYTYREHTTLYYYLDKCDIKREIFDALFDSNYSGHELMNILSNYLRKQFRKKNHKIDNYIVDQLLFDRDTFYILELCNSLRNNILISTILKRYTDSIQDLLLEYVSYHTVYINVIKCMIDEGATLYRFKHINKYFQKFGNRDPKVVEYILKNGNLVVDNDNDDNLINIMPLFPTFSMRELDVLSILKLCKPYIDDINKIDKHGCSILYHCIKSHSVSLVEWLIDNGADINIITKYGFTCITICVILADKYIPEIAELYIKILEIILSKLPTIECIKKTVDYLDDHRYLFIGGNNKSLLKICIKYFILVDYKYTCSMYPSYIEFITDCEKEIADMRQIKINGTDMLTVMYMLNKPTKKRYVNNPIFTDWANKQYKFYNQIIYNANKLIEQSKKIDDMIEEVSIDDNRLSTLPLEIRHLIFSYAFL</sequence>
<feature type="chain" id="PRO_0000067094" description="Ankyrin repeat protein OPG025">
    <location>
        <begin position="1"/>
        <end position="634"/>
    </location>
</feature>
<feature type="repeat" description="ANK 1">
    <location>
        <begin position="36"/>
        <end position="69"/>
    </location>
</feature>
<feature type="repeat" description="ANK 2">
    <location>
        <begin position="70"/>
        <end position="100"/>
    </location>
</feature>
<feature type="repeat" description="ANK 3">
    <location>
        <begin position="103"/>
        <end position="134"/>
    </location>
</feature>
<feature type="repeat" description="ANK 4">
    <location>
        <begin position="175"/>
        <end position="211"/>
    </location>
</feature>
<feature type="repeat" description="ANK 5">
    <location>
        <begin position="307"/>
        <end position="337"/>
    </location>
</feature>
<feature type="repeat" description="ANK 6">
    <location>
        <begin position="412"/>
        <end position="441"/>
    </location>
</feature>
<feature type="sequence conflict" description="In Ref. 1; AAA69599." evidence="3" ref="1">
    <original>KT</original>
    <variation>FS</variation>
    <location>
        <begin position="487"/>
        <end position="488"/>
    </location>
</feature>
<keyword id="KW-0040">ANK repeat</keyword>
<keyword id="KW-0244">Early protein</keyword>
<keyword id="KW-0945">Host-virus interaction</keyword>
<keyword id="KW-1090">Inhibition of host innate immune response by virus</keyword>
<keyword id="KW-1185">Reference proteome</keyword>
<keyword id="KW-0677">Repeat</keyword>
<keyword id="KW-0899">Viral immunoevasion</keyword>
<dbReference type="EMBL" id="M22812">
    <property type="protein sequence ID" value="AAA69599.1"/>
    <property type="molecule type" value="Genomic_DNA"/>
</dbReference>
<dbReference type="EMBL" id="AY243312">
    <property type="protein sequence ID" value="AAO89298.1"/>
    <property type="molecule type" value="Genomic_DNA"/>
</dbReference>
<dbReference type="PIR" id="H31829">
    <property type="entry name" value="WZVZA8"/>
</dbReference>
<dbReference type="RefSeq" id="YP_232901.1">
    <property type="nucleotide sequence ID" value="NC_006998.1"/>
</dbReference>
<dbReference type="SMR" id="P17372"/>
<dbReference type="DNASU" id="3707634"/>
<dbReference type="GeneID" id="3707634"/>
<dbReference type="KEGG" id="vg:3707634"/>
<dbReference type="Proteomes" id="UP000000344">
    <property type="component" value="Genome"/>
</dbReference>
<dbReference type="GO" id="GO:0005737">
    <property type="term" value="C:cytoplasm"/>
    <property type="evidence" value="ECO:0000305"/>
    <property type="project" value="UniProt"/>
</dbReference>
<dbReference type="GO" id="GO:0060090">
    <property type="term" value="F:molecular adaptor activity"/>
    <property type="evidence" value="ECO:0000314"/>
    <property type="project" value="UniProt"/>
</dbReference>
<dbReference type="GO" id="GO:0003723">
    <property type="term" value="F:RNA binding"/>
    <property type="evidence" value="ECO:0007669"/>
    <property type="project" value="InterPro"/>
</dbReference>
<dbReference type="GO" id="GO:0052170">
    <property type="term" value="P:symbiont-mediated suppression of host innate immune response"/>
    <property type="evidence" value="ECO:0000314"/>
    <property type="project" value="UniProt"/>
</dbReference>
<dbReference type="GO" id="GO:0039502">
    <property type="term" value="P:symbiont-mediated suppression of host type I interferon-mediated signaling pathway"/>
    <property type="evidence" value="ECO:0000314"/>
    <property type="project" value="UniProtKB"/>
</dbReference>
<dbReference type="FunFam" id="1.25.40.20:FF:000990">
    <property type="entry name" value="Ankyrin repeat protein C9L"/>
    <property type="match status" value="1"/>
</dbReference>
<dbReference type="Gene3D" id="1.25.40.20">
    <property type="entry name" value="Ankyrin repeat-containing domain"/>
    <property type="match status" value="2"/>
</dbReference>
<dbReference type="InterPro" id="IPR051637">
    <property type="entry name" value="Ank_repeat_dom-contain_49"/>
</dbReference>
<dbReference type="InterPro" id="IPR002110">
    <property type="entry name" value="Ankyrin_rpt"/>
</dbReference>
<dbReference type="InterPro" id="IPR036770">
    <property type="entry name" value="Ankyrin_rpt-contain_sf"/>
</dbReference>
<dbReference type="InterPro" id="IPR001313">
    <property type="entry name" value="Pumilio_RNA-bd_rpt"/>
</dbReference>
<dbReference type="PANTHER" id="PTHR24180">
    <property type="entry name" value="CYCLIN-DEPENDENT KINASE INHIBITOR 2C-RELATED"/>
    <property type="match status" value="1"/>
</dbReference>
<dbReference type="PANTHER" id="PTHR24180:SF45">
    <property type="entry name" value="POLY [ADP-RIBOSE] POLYMERASE TANKYRASE"/>
    <property type="match status" value="1"/>
</dbReference>
<dbReference type="Pfam" id="PF13637">
    <property type="entry name" value="Ank_4"/>
    <property type="match status" value="1"/>
</dbReference>
<dbReference type="SMART" id="SM00248">
    <property type="entry name" value="ANK"/>
    <property type="match status" value="7"/>
</dbReference>
<dbReference type="SMART" id="SM00025">
    <property type="entry name" value="Pumilio"/>
    <property type="match status" value="2"/>
</dbReference>
<dbReference type="SUPFAM" id="SSF48403">
    <property type="entry name" value="Ankyrin repeat"/>
    <property type="match status" value="1"/>
</dbReference>
<dbReference type="PROSITE" id="PS50297">
    <property type="entry name" value="ANK_REP_REGION"/>
    <property type="match status" value="1"/>
</dbReference>
<dbReference type="PROSITE" id="PS50088">
    <property type="entry name" value="ANK_REPEAT"/>
    <property type="match status" value="1"/>
</dbReference>
<organismHost>
    <name type="scientific">Bos taurus</name>
    <name type="common">Bovine</name>
    <dbReference type="NCBI Taxonomy" id="9913"/>
</organismHost>
<protein>
    <recommendedName>
        <fullName>Ankyrin repeat protein OPG025</fullName>
    </recommendedName>
</protein>
<proteinExistence type="evidence at protein level"/>